<keyword id="KW-0025">Alternative splicing</keyword>
<keyword id="KW-0217">Developmental protein</keyword>
<keyword id="KW-0238">DNA-binding</keyword>
<keyword id="KW-0479">Metal-binding</keyword>
<keyword id="KW-0539">Nucleus</keyword>
<keyword id="KW-0675">Receptor</keyword>
<keyword id="KW-1185">Reference proteome</keyword>
<keyword id="KW-0804">Transcription</keyword>
<keyword id="KW-0805">Transcription regulation</keyword>
<keyword id="KW-0862">Zinc</keyword>
<keyword id="KW-0863">Zinc-finger</keyword>
<reference key="1">
    <citation type="journal article" date="2000" name="Dev. Biol.">
        <title>nhr-25, the Caenorhabditis elegans ortholog of ftz-f1, is required for epidermal and somatic gonad development.</title>
        <authorList>
            <person name="Gissendanner C.R."/>
            <person name="Sluder A.E."/>
        </authorList>
    </citation>
    <scope>NUCLEOTIDE SEQUENCE [MRNA] (ISOFORMS A AND B)</scope>
    <scope>FUNCTION</scope>
    <scope>SUBCELLULAR LOCATION</scope>
    <scope>TISSUE SPECIFICITY</scope>
    <scope>DEVELOPMENTAL STAGE</scope>
    <scope>DISRUPTION PHENOTYPE</scope>
    <source>
        <strain>Bristol N2</strain>
    </source>
</reference>
<reference key="2">
    <citation type="journal article" date="1998" name="Science">
        <title>Genome sequence of the nematode C. elegans: a platform for investigating biology.</title>
        <authorList>
            <consortium name="The C. elegans sequencing consortium"/>
        </authorList>
    </citation>
    <scope>NUCLEOTIDE SEQUENCE [LARGE SCALE GENOMIC DNA]</scope>
    <source>
        <strain>Bristol N2</strain>
    </source>
</reference>
<reference key="3">
    <citation type="journal article" date="2004" name="Mol. Cell. Biol.">
        <title>The Caenorhabditis elegans nuclear receptor gene nhr-25 regulates epidermal cell development.</title>
        <authorList>
            <person name="Chen Z."/>
            <person name="Eastburn D.J."/>
            <person name="Han M."/>
        </authorList>
    </citation>
    <scope>FUNCTION</scope>
    <scope>SUBCELLULAR LOCATION</scope>
    <scope>INTERACTION WITH NOB-1 AND LIN-39</scope>
    <scope>DISRUPTION PHENOTYPE</scope>
    <scope>MUTAGENESIS OF LEU-32</scope>
</reference>
<reference key="4">
    <citation type="journal article" date="2011" name="PLoS Genet.">
        <title>A bow-tie genetic architecture for morphogenesis suggested by a genome-wide RNAi screen in Caenorhabditis elegans.</title>
        <authorList>
            <person name="Nelson M.D."/>
            <person name="Zhou E."/>
            <person name="Kiontke K."/>
            <person name="Fradin H."/>
            <person name="Maldonado G."/>
            <person name="Martin D."/>
            <person name="Shah K."/>
            <person name="Fitch D.H."/>
        </authorList>
    </citation>
    <scope>FUNCTION</scope>
    <scope>DEVELOPMENTAL STAGE</scope>
    <scope>DISRUPTION PHENOTYPE</scope>
    <scope>MUTAGENESIS OF LEU-32</scope>
</reference>
<reference key="5">
    <citation type="journal article" date="2018" name="Sci. Rep.">
        <title>Probiotic Lactobacillus fermentum strain JDFM216 stimulates the longevity and immune response of Caenorhabditis elegans through a nuclear hormone receptor.</title>
        <authorList>
            <person name="Park M.R."/>
            <person name="Ryu S."/>
            <person name="Maburutse B.E."/>
            <person name="Oh N.S."/>
            <person name="Kim S.H."/>
            <person name="Oh S."/>
            <person name="Jeong S.Y."/>
            <person name="Jeong D.Y."/>
            <person name="Oh S."/>
            <person name="Kim Y."/>
        </authorList>
    </citation>
    <scope>FUNCTION</scope>
    <scope>INDUCTION</scope>
</reference>
<dbReference type="EMBL" id="AF179214">
    <property type="protein sequence ID" value="AAF67038.1"/>
    <property type="molecule type" value="mRNA"/>
</dbReference>
<dbReference type="EMBL" id="AF179215">
    <property type="protein sequence ID" value="AAF67039.1"/>
    <property type="molecule type" value="mRNA"/>
</dbReference>
<dbReference type="EMBL" id="AF179216">
    <property type="protein sequence ID" value="AAF67040.1"/>
    <property type="molecule type" value="mRNA"/>
</dbReference>
<dbReference type="EMBL" id="BX284606">
    <property type="protein sequence ID" value="CAA91028.1"/>
    <property type="molecule type" value="Genomic_DNA"/>
</dbReference>
<dbReference type="EMBL" id="BX284606">
    <property type="protein sequence ID" value="CAE48496.1"/>
    <property type="molecule type" value="Genomic_DNA"/>
</dbReference>
<dbReference type="PIR" id="T20764">
    <property type="entry name" value="T20764"/>
</dbReference>
<dbReference type="RefSeq" id="NP_001024550.1">
    <molecule id="Q19345-1"/>
    <property type="nucleotide sequence ID" value="NM_001029379.5"/>
</dbReference>
<dbReference type="RefSeq" id="NP_001024551.1">
    <molecule id="Q19345-2"/>
    <property type="nucleotide sequence ID" value="NM_001029380.8"/>
</dbReference>
<dbReference type="SMR" id="Q19345"/>
<dbReference type="BioGRID" id="46336">
    <property type="interactions" value="9"/>
</dbReference>
<dbReference type="FunCoup" id="Q19345">
    <property type="interactions" value="253"/>
</dbReference>
<dbReference type="IntAct" id="Q19345">
    <property type="interactions" value="2"/>
</dbReference>
<dbReference type="STRING" id="6239.F11C1.6a.1"/>
<dbReference type="PaxDb" id="6239-F11C1.6a"/>
<dbReference type="PeptideAtlas" id="Q19345"/>
<dbReference type="EnsemblMetazoa" id="F11C1.6a.1">
    <molecule id="Q19345-1"/>
    <property type="protein sequence ID" value="F11C1.6a.1"/>
    <property type="gene ID" value="WBGene00003623"/>
</dbReference>
<dbReference type="EnsemblMetazoa" id="F11C1.6a.2">
    <molecule id="Q19345-1"/>
    <property type="protein sequence ID" value="F11C1.6a.2"/>
    <property type="gene ID" value="WBGene00003623"/>
</dbReference>
<dbReference type="EnsemblMetazoa" id="F11C1.6b.1">
    <molecule id="Q19345-2"/>
    <property type="protein sequence ID" value="F11C1.6b.1"/>
    <property type="gene ID" value="WBGene00003623"/>
</dbReference>
<dbReference type="GeneID" id="181432"/>
<dbReference type="KEGG" id="cel:CELE_F11C1.6"/>
<dbReference type="UCSC" id="F11C1.6b.2">
    <molecule id="Q19345-1"/>
    <property type="organism name" value="c. elegans"/>
</dbReference>
<dbReference type="AGR" id="WB:WBGene00003623"/>
<dbReference type="CTD" id="181432"/>
<dbReference type="WormBase" id="F11C1.6a">
    <molecule id="Q19345-1"/>
    <property type="protein sequence ID" value="CE03191"/>
    <property type="gene ID" value="WBGene00003623"/>
    <property type="gene designation" value="nhr-25"/>
</dbReference>
<dbReference type="WormBase" id="F11C1.6b">
    <molecule id="Q19345-2"/>
    <property type="protein sequence ID" value="CE35856"/>
    <property type="gene ID" value="WBGene00003623"/>
    <property type="gene designation" value="nhr-25"/>
</dbReference>
<dbReference type="eggNOG" id="KOG4218">
    <property type="taxonomic scope" value="Eukaryota"/>
</dbReference>
<dbReference type="GeneTree" id="ENSGT00940000153391"/>
<dbReference type="HOGENOM" id="CLU_011437_0_0_1"/>
<dbReference type="InParanoid" id="Q19345"/>
<dbReference type="OMA" id="NSIVTWA"/>
<dbReference type="OrthoDB" id="5771769at2759"/>
<dbReference type="PhylomeDB" id="Q19345"/>
<dbReference type="Reactome" id="R-CEL-383280">
    <property type="pathway name" value="Nuclear Receptor transcription pathway"/>
</dbReference>
<dbReference type="Reactome" id="R-CEL-4090294">
    <property type="pathway name" value="SUMOylation of intracellular receptors"/>
</dbReference>
<dbReference type="SignaLink" id="Q19345"/>
<dbReference type="PRO" id="PR:Q19345"/>
<dbReference type="Proteomes" id="UP000001940">
    <property type="component" value="Chromosome X"/>
</dbReference>
<dbReference type="Bgee" id="WBGene00003623">
    <property type="expression patterns" value="Expressed in embryo and 6 other cell types or tissues"/>
</dbReference>
<dbReference type="GO" id="GO:0005634">
    <property type="term" value="C:nucleus"/>
    <property type="evidence" value="ECO:0000314"/>
    <property type="project" value="WormBase"/>
</dbReference>
<dbReference type="GO" id="GO:0090575">
    <property type="term" value="C:RNA polymerase II transcription regulator complex"/>
    <property type="evidence" value="ECO:0000318"/>
    <property type="project" value="GO_Central"/>
</dbReference>
<dbReference type="GO" id="GO:0070016">
    <property type="term" value="F:armadillo repeat domain binding"/>
    <property type="evidence" value="ECO:0000353"/>
    <property type="project" value="UniProtKB"/>
</dbReference>
<dbReference type="GO" id="GO:0004879">
    <property type="term" value="F:nuclear receptor activity"/>
    <property type="evidence" value="ECO:0007669"/>
    <property type="project" value="InterPro"/>
</dbReference>
<dbReference type="GO" id="GO:0000978">
    <property type="term" value="F:RNA polymerase II cis-regulatory region sequence-specific DNA binding"/>
    <property type="evidence" value="ECO:0000318"/>
    <property type="project" value="GO_Central"/>
</dbReference>
<dbReference type="GO" id="GO:0008270">
    <property type="term" value="F:zinc ion binding"/>
    <property type="evidence" value="ECO:0007669"/>
    <property type="project" value="UniProtKB-KW"/>
</dbReference>
<dbReference type="GO" id="GO:0009755">
    <property type="term" value="P:hormone-mediated signaling pathway"/>
    <property type="evidence" value="ECO:0000318"/>
    <property type="project" value="GO_Central"/>
</dbReference>
<dbReference type="GO" id="GO:0018996">
    <property type="term" value="P:molting cycle, collagen and cuticulin-based cuticle"/>
    <property type="evidence" value="ECO:0000315"/>
    <property type="project" value="WormBase"/>
</dbReference>
<dbReference type="GO" id="GO:0110039">
    <property type="term" value="P:positive regulation of nematode male tail tip morphogenesis"/>
    <property type="evidence" value="ECO:0000315"/>
    <property type="project" value="UniProtKB"/>
</dbReference>
<dbReference type="GO" id="GO:0045944">
    <property type="term" value="P:positive regulation of transcription by RNA polymerase II"/>
    <property type="evidence" value="ECO:0000315"/>
    <property type="project" value="WormBase"/>
</dbReference>
<dbReference type="GO" id="GO:0006357">
    <property type="term" value="P:regulation of transcription by RNA polymerase II"/>
    <property type="evidence" value="ECO:0000318"/>
    <property type="project" value="GO_Central"/>
</dbReference>
<dbReference type="GO" id="GO:0009888">
    <property type="term" value="P:tissue development"/>
    <property type="evidence" value="ECO:0000318"/>
    <property type="project" value="GO_Central"/>
</dbReference>
<dbReference type="CDD" id="cd07167">
    <property type="entry name" value="NR_DBD_Lrh-1_like"/>
    <property type="match status" value="1"/>
</dbReference>
<dbReference type="CDD" id="cd06930">
    <property type="entry name" value="NR_LBD_F2"/>
    <property type="match status" value="1"/>
</dbReference>
<dbReference type="FunFam" id="3.30.50.10:FF:000006">
    <property type="entry name" value="Nuclear receptor subfamily 5 group A member"/>
    <property type="match status" value="1"/>
</dbReference>
<dbReference type="Gene3D" id="3.30.50.10">
    <property type="entry name" value="Erythroid Transcription Factor GATA-1, subunit A"/>
    <property type="match status" value="1"/>
</dbReference>
<dbReference type="Gene3D" id="1.10.565.10">
    <property type="entry name" value="Retinoid X Receptor"/>
    <property type="match status" value="1"/>
</dbReference>
<dbReference type="InterPro" id="IPR035500">
    <property type="entry name" value="NHR-like_dom_sf"/>
</dbReference>
<dbReference type="InterPro" id="IPR016355">
    <property type="entry name" value="NR5-like"/>
</dbReference>
<dbReference type="InterPro" id="IPR000536">
    <property type="entry name" value="Nucl_hrmn_rcpt_lig-bd"/>
</dbReference>
<dbReference type="InterPro" id="IPR001723">
    <property type="entry name" value="Nuclear_hrmn_rcpt"/>
</dbReference>
<dbReference type="InterPro" id="IPR001628">
    <property type="entry name" value="Znf_hrmn_rcpt"/>
</dbReference>
<dbReference type="InterPro" id="IPR013088">
    <property type="entry name" value="Znf_NHR/GATA"/>
</dbReference>
<dbReference type="PANTHER" id="PTHR24086:SF15">
    <property type="entry name" value="NUCLEAR HORMONE RECEPTOR FTZ-F1"/>
    <property type="match status" value="1"/>
</dbReference>
<dbReference type="PANTHER" id="PTHR24086">
    <property type="entry name" value="NUCLEAR RECEPTOR SUBFAMILY 5 GROUP A"/>
    <property type="match status" value="1"/>
</dbReference>
<dbReference type="Pfam" id="PF00104">
    <property type="entry name" value="Hormone_recep"/>
    <property type="match status" value="1"/>
</dbReference>
<dbReference type="Pfam" id="PF00105">
    <property type="entry name" value="zf-C4"/>
    <property type="match status" value="1"/>
</dbReference>
<dbReference type="PRINTS" id="PR00398">
    <property type="entry name" value="STRDHORMONER"/>
</dbReference>
<dbReference type="PRINTS" id="PR00047">
    <property type="entry name" value="STROIDFINGER"/>
</dbReference>
<dbReference type="SMART" id="SM00430">
    <property type="entry name" value="HOLI"/>
    <property type="match status" value="1"/>
</dbReference>
<dbReference type="SMART" id="SM00399">
    <property type="entry name" value="ZnF_C4"/>
    <property type="match status" value="1"/>
</dbReference>
<dbReference type="SUPFAM" id="SSF57716">
    <property type="entry name" value="Glucocorticoid receptor-like (DNA-binding domain)"/>
    <property type="match status" value="1"/>
</dbReference>
<dbReference type="SUPFAM" id="SSF48508">
    <property type="entry name" value="Nuclear receptor ligand-binding domain"/>
    <property type="match status" value="1"/>
</dbReference>
<dbReference type="PROSITE" id="PS51843">
    <property type="entry name" value="NR_LBD"/>
    <property type="match status" value="1"/>
</dbReference>
<dbReference type="PROSITE" id="PS00031">
    <property type="entry name" value="NUCLEAR_REC_DBD_1"/>
    <property type="match status" value="1"/>
</dbReference>
<dbReference type="PROSITE" id="PS51030">
    <property type="entry name" value="NUCLEAR_REC_DBD_2"/>
    <property type="match status" value="1"/>
</dbReference>
<proteinExistence type="evidence at protein level"/>
<evidence type="ECO:0000255" key="1">
    <source>
        <dbReference type="PROSITE-ProRule" id="PRU00407"/>
    </source>
</evidence>
<evidence type="ECO:0000255" key="2">
    <source>
        <dbReference type="PROSITE-ProRule" id="PRU01189"/>
    </source>
</evidence>
<evidence type="ECO:0000269" key="3">
    <source>
    </source>
</evidence>
<evidence type="ECO:0000269" key="4">
    <source>
    </source>
</evidence>
<evidence type="ECO:0000269" key="5">
    <source>
    </source>
</evidence>
<evidence type="ECO:0000269" key="6">
    <source>
    </source>
</evidence>
<evidence type="ECO:0000303" key="7">
    <source>
    </source>
</evidence>
<evidence type="ECO:0000305" key="8"/>
<evidence type="ECO:0000312" key="9">
    <source>
        <dbReference type="WormBase" id="F11C1.6a"/>
    </source>
</evidence>
<evidence type="ECO:0000312" key="10">
    <source>
        <dbReference type="WormBase" id="F11C1.6b"/>
    </source>
</evidence>
<sequence length="572" mass="64772">MTDVERMVLRPNHEGEMCPVCGDRVSGYHYGLLTCESCKGFFKRTVQNKKQYQCSAEANCHVDRTCRKRCPSCRFQKCLTMGMKMEAVRADRMRGGRNKFGSFYKKDRAHRMQRNAMRVSTVQVPAVLGAQSQAQTFYQPPEHQVSSSTTDQNNQINYFDQTKIKTEYIKTEYDAHLQSPTLSSSTNQQLSVSDFIMRPGYLVDPQDSLAVLLGSTIDDPLLRHTFPAAYQLNEVKQEPFDYSEQFIHHSLHDYPTYTSNTTNYATMMPMTTVSSTQSLVTSTSSTTTGRMTEASSTSPILPLCPAPTEKTVDHFYNSSIAEMCKTLPDDAQIARIFTSVKGTSKPEKHAFSIQVAEENLKDIVIWAKNDQLFSKLSLDDQMILLQTSWTTVHIVDITNAMVHGNLLSQYKMSNGDEVPVGLVALLGNQTFVSSWNDVVIRLRNMGFTNFDYCAFRFLALFDQSMDSFPAVSTARSRVLQSWREVRCTTAFLEIFEQIRRLAYDSLRYLWNLHSNCPTNWEQFFPEASLVLEMIRTTVNRSASSSVTAITQVPAIQLPTPQATYTAVPYMAS</sequence>
<comment type="function">
    <text evidence="3 4 5 6">Orphan nuclear receptor and probable transcription activator, required during development (PubMed:10772806, PubMed:15314147). Plays a role in male tail tip morphogenesis regulating the expression of the transcription factor dmd-3 in a negative feedback loop (PubMed:21408209). Regulates vulval precursor cell (VPC) differentiation, in concert with homeobox protein lin-39 (PubMed:15314147). Involved in promoting embryogenesis, in concert with homeobox protein nob-1 (PubMed:15314147). May play a role in modulation of lifespan and immunity (PubMed:29748542).</text>
</comment>
<comment type="subunit">
    <text evidence="4">Interacts with lin-39 (PubMed:15314147). Interacts with nob-1 (PubMed:15314147).</text>
</comment>
<comment type="interaction">
    <interactant intactId="EBI-3871243">
        <id>Q19345</id>
    </interactant>
    <interactant intactId="EBI-3871339">
        <id>Q9XVI2</id>
        <label>sys-1</label>
    </interactant>
    <organismsDiffer>false</organismsDiffer>
    <experiments>2</experiments>
</comment>
<comment type="interaction">
    <interactant intactId="EBI-3871243">
        <id>Q19345</id>
    </interactant>
    <interactant intactId="EBI-2530558">
        <id>Q10953</id>
        <label>wrm-1</label>
    </interactant>
    <organismsDiffer>false</organismsDiffer>
    <experiments>3</experiments>
</comment>
<comment type="subcellular location">
    <subcellularLocation>
        <location evidence="1 3 4">Nucleus</location>
    </subcellularLocation>
</comment>
<comment type="alternative products">
    <event type="alternative splicing"/>
    <isoform>
        <id>Q19345-1</id>
        <name evidence="9">a</name>
        <name evidence="7">Alpha</name>
        <sequence type="displayed"/>
    </isoform>
    <isoform>
        <id>Q19345-2</id>
        <name evidence="10">b</name>
        <name evidence="7">Beta</name>
        <sequence type="described" ref="VSP_003723"/>
    </isoform>
</comment>
<comment type="tissue specificity">
    <text evidence="3">Expressed in the epidermis, the developing somatic gonad, and a subset of other epithelial cells.</text>
</comment>
<comment type="developmental stage">
    <text evidence="3 5">First expressed post-fertilization and expression continues throughout embryogenesis to adulthood (PubMed:10772806). More highly expressed in embryos and L1 to L3 stage larvae than L4 larva and adults (PubMed:10772806). Highly expressed in hyp8-11 cells in the male tail tip during male tail tip morphogenesis but ceases by the late L4 larval stage of development (PubMed:21408209).</text>
</comment>
<comment type="induction">
    <text evidence="6">Transcription up-regulated in response to intestinal colonization by probiotic Lactobacillus fermentum strain JDFM216 (PubMed:29748542).</text>
</comment>
<comment type="disruption phenotype">
    <text evidence="3 4 5">RNAi-mediated knockdown results in embryonic or larval lethality in the majority of animals (PubMed:10772806). RNAi-mediated knockdown results in embryos that do not survive due to failed epidermally mediated process of embryo elongation (PubMed:10772806). Of the animals that hatch, larvae display a squat body statue, referred to as a dumpy phenotype, have uncoordinated movements and posterior patterning defects (PubMed:10772806). Larvae also have anterior patterning defects such as kinked or notched noses (PubMed:10772806). Animals that progress to adulthood are sterile and vulvaless (PubMed:10772806). RNAi-mediated knockdown disrupts tail tip morphogenesis resulting in retention of the pointed larval tail tip in 33% of adult males (also known as the Lep phenotype) (PubMed:10772806, PubMed:21408209). Knockdown causes enhanced embryonic lethality on a nob-1 mutant background.</text>
</comment>
<comment type="similarity">
    <text evidence="8">Belongs to the nuclear hormone receptor family.</text>
</comment>
<accession>Q19345</accession>
<accession>Q7JMA3</accession>
<accession>Q9NJ95</accession>
<accession>Q9NJ96</accession>
<accession>Q9NJ97</accession>
<organism>
    <name type="scientific">Caenorhabditis elegans</name>
    <dbReference type="NCBI Taxonomy" id="6239"/>
    <lineage>
        <taxon>Eukaryota</taxon>
        <taxon>Metazoa</taxon>
        <taxon>Ecdysozoa</taxon>
        <taxon>Nematoda</taxon>
        <taxon>Chromadorea</taxon>
        <taxon>Rhabditida</taxon>
        <taxon>Rhabditina</taxon>
        <taxon>Rhabditomorpha</taxon>
        <taxon>Rhabditoidea</taxon>
        <taxon>Rhabditidae</taxon>
        <taxon>Peloderinae</taxon>
        <taxon>Caenorhabditis</taxon>
    </lineage>
</organism>
<name>NHR25_CAEEL</name>
<feature type="chain" id="PRO_0000053774" description="Nuclear hormone receptor family member nhr-25">
    <location>
        <begin position="1"/>
        <end position="572"/>
    </location>
</feature>
<feature type="domain" description="NR LBD" evidence="2">
    <location>
        <begin position="307"/>
        <end position="567"/>
    </location>
</feature>
<feature type="DNA-binding region" description="Nuclear receptor" evidence="1">
    <location>
        <begin position="15"/>
        <end position="90"/>
    </location>
</feature>
<feature type="zinc finger region" description="NR C4-type" evidence="1">
    <location>
        <begin position="18"/>
        <end position="38"/>
    </location>
</feature>
<feature type="zinc finger region" description="NR C4-type" evidence="1">
    <location>
        <begin position="54"/>
        <end position="78"/>
    </location>
</feature>
<feature type="splice variant" id="VSP_003723" description="In isoform b." evidence="7">
    <location>
        <begin position="1"/>
        <end position="80"/>
    </location>
</feature>
<feature type="mutagenesis site" description="In ku217; disrupts tail tip morphogenesis resulting in retention of the pointed larval tail tip in adult males (also known as the Lep phenotype). Causes embryonic and larval lethality, sterility, egg-laying defects, and abnormal vulval precursor cell differentiation. Abolishes expression of the transcription factor dmd-3 in hyp8-11 tail tip cells." evidence="4 5">
    <original>L</original>
    <variation>F</variation>
    <location>
        <position position="32"/>
    </location>
</feature>
<feature type="sequence conflict" description="In Ref. 1; AAF67039." evidence="8" ref="1">
    <original>F</original>
    <variation>L</variation>
    <location>
        <position position="100"/>
    </location>
</feature>
<feature type="sequence conflict" description="In Ref. 1; AAF67039." evidence="8" ref="1">
    <original>R</original>
    <variation>Q</variation>
    <location>
        <position position="540"/>
    </location>
</feature>
<protein>
    <recommendedName>
        <fullName>Nuclear hormone receptor family member nhr-25</fullName>
    </recommendedName>
</protein>
<gene>
    <name evidence="9" type="primary">nhr-25</name>
    <name evidence="10" type="ORF">F11C1.6</name>
</gene>